<gene>
    <name evidence="1" type="primary">tmcAL</name>
    <name type="ordered locus">OEOE_0912</name>
</gene>
<sequence>MEATGLITEYNPFHNGHLYHLKKAQELTKADVTIVLMSGNWVQRGLPAITDKWKRAQAAIDAGADLVFELPFYYAVQAGEIFAQGAVRLLSDLQVSSIICGSEHADIDFINLAAHEPDISGNSNFDKKNRTFASNYAAALEEKTGFYLENANDILAFSYAKAILNQNLTEKIKLRTISRVSADYHDQFLNDGEIASATAIRKALSEGQNVDSYTPMSDLQYTDYEARLFQLLKYRLSTDGLGQIRSIYQVNEGMEYLIKQAIEKNPSDFGELLALIKSKRYTFARLHRVLVYILLNIKVDQMNLAMQNPYHRLLGFTEKGRQYLHEKKGRFNFPTISHVDQKTANKSLAIDYKAGLVYNQIMDYKSTQDIKRTPIQS</sequence>
<comment type="function">
    <text evidence="1">Catalyzes the formation of N(4)-acetylcytidine (ac(4)C) at the wobble position of elongator tRNA(Met), using acetate and ATP as substrates. First activates an acetate ion to form acetyladenylate (Ac-AMP) and then transfers the acetyl group to tRNA to form ac(4)C34.</text>
</comment>
<comment type="catalytic activity">
    <reaction evidence="1">
        <text>cytidine(34) in elongator tRNA(Met) + acetate + ATP = N(4)-acetylcytidine(34) in elongator tRNA(Met) + AMP + diphosphate</text>
        <dbReference type="Rhea" id="RHEA:58144"/>
        <dbReference type="Rhea" id="RHEA-COMP:10693"/>
        <dbReference type="Rhea" id="RHEA-COMP:10694"/>
        <dbReference type="ChEBI" id="CHEBI:30089"/>
        <dbReference type="ChEBI" id="CHEBI:30616"/>
        <dbReference type="ChEBI" id="CHEBI:33019"/>
        <dbReference type="ChEBI" id="CHEBI:74900"/>
        <dbReference type="ChEBI" id="CHEBI:82748"/>
        <dbReference type="ChEBI" id="CHEBI:456215"/>
    </reaction>
</comment>
<comment type="subcellular location">
    <subcellularLocation>
        <location evidence="1">Cytoplasm</location>
    </subcellularLocation>
</comment>
<comment type="similarity">
    <text evidence="1">Belongs to the TmcAL family.</text>
</comment>
<proteinExistence type="inferred from homology"/>
<dbReference type="EC" id="6.3.4.-" evidence="1"/>
<dbReference type="EMBL" id="CP000411">
    <property type="protein sequence ID" value="ABJ56829.1"/>
    <property type="molecule type" value="Genomic_DNA"/>
</dbReference>
<dbReference type="RefSeq" id="WP_002820546.1">
    <property type="nucleotide sequence ID" value="NC_008528.1"/>
</dbReference>
<dbReference type="SMR" id="Q04FE3"/>
<dbReference type="STRING" id="203123.OEOE_0912"/>
<dbReference type="DNASU" id="4415272"/>
<dbReference type="KEGG" id="ooe:OEOE_0912"/>
<dbReference type="eggNOG" id="COG1323">
    <property type="taxonomic scope" value="Bacteria"/>
</dbReference>
<dbReference type="HOGENOM" id="CLU_038915_0_2_9"/>
<dbReference type="Proteomes" id="UP000000774">
    <property type="component" value="Chromosome"/>
</dbReference>
<dbReference type="GO" id="GO:0005737">
    <property type="term" value="C:cytoplasm"/>
    <property type="evidence" value="ECO:0007669"/>
    <property type="project" value="UniProtKB-SubCell"/>
</dbReference>
<dbReference type="GO" id="GO:0005524">
    <property type="term" value="F:ATP binding"/>
    <property type="evidence" value="ECO:0007669"/>
    <property type="project" value="UniProtKB-KW"/>
</dbReference>
<dbReference type="GO" id="GO:0016879">
    <property type="term" value="F:ligase activity, forming carbon-nitrogen bonds"/>
    <property type="evidence" value="ECO:0007669"/>
    <property type="project" value="UniProtKB-UniRule"/>
</dbReference>
<dbReference type="GO" id="GO:0000049">
    <property type="term" value="F:tRNA binding"/>
    <property type="evidence" value="ECO:0007669"/>
    <property type="project" value="UniProtKB-KW"/>
</dbReference>
<dbReference type="GO" id="GO:0006400">
    <property type="term" value="P:tRNA modification"/>
    <property type="evidence" value="ECO:0007669"/>
    <property type="project" value="UniProtKB-UniRule"/>
</dbReference>
<dbReference type="Gene3D" id="3.40.50.620">
    <property type="entry name" value="HUPs"/>
    <property type="match status" value="1"/>
</dbReference>
<dbReference type="HAMAP" id="MF_01539">
    <property type="entry name" value="TmcAL"/>
    <property type="match status" value="1"/>
</dbReference>
<dbReference type="InterPro" id="IPR014729">
    <property type="entry name" value="Rossmann-like_a/b/a_fold"/>
</dbReference>
<dbReference type="InterPro" id="IPR008513">
    <property type="entry name" value="tRNA(Met)_cyd_acetate_ligase"/>
</dbReference>
<dbReference type="NCBIfam" id="NF010191">
    <property type="entry name" value="PRK13670.1"/>
    <property type="match status" value="1"/>
</dbReference>
<dbReference type="PANTHER" id="PTHR37825">
    <property type="entry name" value="TRNA(MET) CYTIDINE ACETATE LIGASE"/>
    <property type="match status" value="1"/>
</dbReference>
<dbReference type="PANTHER" id="PTHR37825:SF1">
    <property type="entry name" value="TRNA(MET) CYTIDINE ACETATE LIGASE"/>
    <property type="match status" value="1"/>
</dbReference>
<dbReference type="Pfam" id="PF05636">
    <property type="entry name" value="HIGH_NTase1"/>
    <property type="match status" value="1"/>
</dbReference>
<dbReference type="SUPFAM" id="SSF52374">
    <property type="entry name" value="Nucleotidylyl transferase"/>
    <property type="match status" value="1"/>
</dbReference>
<evidence type="ECO:0000255" key="1">
    <source>
        <dbReference type="HAMAP-Rule" id="MF_01539"/>
    </source>
</evidence>
<feature type="chain" id="PRO_0000300185" description="tRNA(Met) cytidine acetate ligase">
    <location>
        <begin position="1"/>
        <end position="377"/>
    </location>
</feature>
<feature type="binding site" evidence="1">
    <location>
        <begin position="7"/>
        <end position="20"/>
    </location>
    <ligand>
        <name>ATP</name>
        <dbReference type="ChEBI" id="CHEBI:30616"/>
    </ligand>
</feature>
<feature type="binding site" evidence="1">
    <location>
        <position position="101"/>
    </location>
    <ligand>
        <name>ATP</name>
        <dbReference type="ChEBI" id="CHEBI:30616"/>
    </ligand>
</feature>
<feature type="binding site" evidence="1">
    <location>
        <position position="152"/>
    </location>
    <ligand>
        <name>ATP</name>
        <dbReference type="ChEBI" id="CHEBI:30616"/>
    </ligand>
</feature>
<feature type="binding site" evidence="1">
    <location>
        <position position="179"/>
    </location>
    <ligand>
        <name>ATP</name>
        <dbReference type="ChEBI" id="CHEBI:30616"/>
    </ligand>
</feature>
<reference key="1">
    <citation type="journal article" date="2006" name="Proc. Natl. Acad. Sci. U.S.A.">
        <title>Comparative genomics of the lactic acid bacteria.</title>
        <authorList>
            <person name="Makarova K.S."/>
            <person name="Slesarev A."/>
            <person name="Wolf Y.I."/>
            <person name="Sorokin A."/>
            <person name="Mirkin B."/>
            <person name="Koonin E.V."/>
            <person name="Pavlov A."/>
            <person name="Pavlova N."/>
            <person name="Karamychev V."/>
            <person name="Polouchine N."/>
            <person name="Shakhova V."/>
            <person name="Grigoriev I."/>
            <person name="Lou Y."/>
            <person name="Rohksar D."/>
            <person name="Lucas S."/>
            <person name="Huang K."/>
            <person name="Goodstein D.M."/>
            <person name="Hawkins T."/>
            <person name="Plengvidhya V."/>
            <person name="Welker D."/>
            <person name="Hughes J."/>
            <person name="Goh Y."/>
            <person name="Benson A."/>
            <person name="Baldwin K."/>
            <person name="Lee J.-H."/>
            <person name="Diaz-Muniz I."/>
            <person name="Dosti B."/>
            <person name="Smeianov V."/>
            <person name="Wechter W."/>
            <person name="Barabote R."/>
            <person name="Lorca G."/>
            <person name="Altermann E."/>
            <person name="Barrangou R."/>
            <person name="Ganesan B."/>
            <person name="Xie Y."/>
            <person name="Rawsthorne H."/>
            <person name="Tamir D."/>
            <person name="Parker C."/>
            <person name="Breidt F."/>
            <person name="Broadbent J.R."/>
            <person name="Hutkins R."/>
            <person name="O'Sullivan D."/>
            <person name="Steele J."/>
            <person name="Unlu G."/>
            <person name="Saier M.H. Jr."/>
            <person name="Klaenhammer T."/>
            <person name="Richardson P."/>
            <person name="Kozyavkin S."/>
            <person name="Weimer B.C."/>
            <person name="Mills D.A."/>
        </authorList>
    </citation>
    <scope>NUCLEOTIDE SEQUENCE [LARGE SCALE GENOMIC DNA]</scope>
    <source>
        <strain>ATCC BAA-331 / PSU-1</strain>
    </source>
</reference>
<accession>Q04FE3</accession>
<keyword id="KW-0067">ATP-binding</keyword>
<keyword id="KW-0963">Cytoplasm</keyword>
<keyword id="KW-0436">Ligase</keyword>
<keyword id="KW-0547">Nucleotide-binding</keyword>
<keyword id="KW-1185">Reference proteome</keyword>
<keyword id="KW-0694">RNA-binding</keyword>
<keyword id="KW-0819">tRNA processing</keyword>
<keyword id="KW-0820">tRNA-binding</keyword>
<protein>
    <recommendedName>
        <fullName evidence="1">tRNA(Met) cytidine acetate ligase</fullName>
        <ecNumber evidence="1">6.3.4.-</ecNumber>
    </recommendedName>
</protein>
<organism>
    <name type="scientific">Oenococcus oeni (strain ATCC BAA-331 / PSU-1)</name>
    <dbReference type="NCBI Taxonomy" id="203123"/>
    <lineage>
        <taxon>Bacteria</taxon>
        <taxon>Bacillati</taxon>
        <taxon>Bacillota</taxon>
        <taxon>Bacilli</taxon>
        <taxon>Lactobacillales</taxon>
        <taxon>Lactobacillaceae</taxon>
        <taxon>Oenococcus</taxon>
    </lineage>
</organism>
<name>TMCAL_OENOB</name>